<gene>
    <name evidence="1" type="primary">aroC</name>
    <name type="ordered locus">BPSL1962</name>
</gene>
<name>AROC_BURPS</name>
<accession>Q63TK6</accession>
<proteinExistence type="inferred from homology"/>
<comment type="function">
    <text evidence="1">Catalyzes the anti-1,4-elimination of the C-3 phosphate and the C-6 proR hydrogen from 5-enolpyruvylshikimate-3-phosphate (EPSP) to yield chorismate, which is the branch point compound that serves as the starting substrate for the three terminal pathways of aromatic amino acid biosynthesis. This reaction introduces a second double bond into the aromatic ring system.</text>
</comment>
<comment type="catalytic activity">
    <reaction evidence="1">
        <text>5-O-(1-carboxyvinyl)-3-phosphoshikimate = chorismate + phosphate</text>
        <dbReference type="Rhea" id="RHEA:21020"/>
        <dbReference type="ChEBI" id="CHEBI:29748"/>
        <dbReference type="ChEBI" id="CHEBI:43474"/>
        <dbReference type="ChEBI" id="CHEBI:57701"/>
        <dbReference type="EC" id="4.2.3.5"/>
    </reaction>
</comment>
<comment type="cofactor">
    <cofactor evidence="1">
        <name>FMNH2</name>
        <dbReference type="ChEBI" id="CHEBI:57618"/>
    </cofactor>
    <text evidence="1">Reduced FMN (FMNH(2)).</text>
</comment>
<comment type="pathway">
    <text evidence="1">Metabolic intermediate biosynthesis; chorismate biosynthesis; chorismate from D-erythrose 4-phosphate and phosphoenolpyruvate: step 7/7.</text>
</comment>
<comment type="subunit">
    <text evidence="1">Homotetramer.</text>
</comment>
<comment type="similarity">
    <text evidence="1">Belongs to the chorismate synthase family.</text>
</comment>
<dbReference type="EC" id="4.2.3.5" evidence="1"/>
<dbReference type="EMBL" id="BX571965">
    <property type="protein sequence ID" value="CAH35961.1"/>
    <property type="molecule type" value="Genomic_DNA"/>
</dbReference>
<dbReference type="RefSeq" id="WP_004534774.1">
    <property type="nucleotide sequence ID" value="NZ_CP009538.1"/>
</dbReference>
<dbReference type="RefSeq" id="YP_108560.1">
    <property type="nucleotide sequence ID" value="NC_006350.1"/>
</dbReference>
<dbReference type="SMR" id="Q63TK6"/>
<dbReference type="STRING" id="272560.BPSL1962"/>
<dbReference type="GeneID" id="93060029"/>
<dbReference type="KEGG" id="bps:BPSL1962"/>
<dbReference type="PATRIC" id="fig|272560.51.peg.4110"/>
<dbReference type="eggNOG" id="COG0082">
    <property type="taxonomic scope" value="Bacteria"/>
</dbReference>
<dbReference type="UniPathway" id="UPA00053">
    <property type="reaction ID" value="UER00090"/>
</dbReference>
<dbReference type="Proteomes" id="UP000000605">
    <property type="component" value="Chromosome 1"/>
</dbReference>
<dbReference type="GO" id="GO:0005829">
    <property type="term" value="C:cytosol"/>
    <property type="evidence" value="ECO:0007669"/>
    <property type="project" value="TreeGrafter"/>
</dbReference>
<dbReference type="GO" id="GO:0004107">
    <property type="term" value="F:chorismate synthase activity"/>
    <property type="evidence" value="ECO:0007669"/>
    <property type="project" value="UniProtKB-UniRule"/>
</dbReference>
<dbReference type="GO" id="GO:0010181">
    <property type="term" value="F:FMN binding"/>
    <property type="evidence" value="ECO:0007669"/>
    <property type="project" value="TreeGrafter"/>
</dbReference>
<dbReference type="GO" id="GO:0008652">
    <property type="term" value="P:amino acid biosynthetic process"/>
    <property type="evidence" value="ECO:0007669"/>
    <property type="project" value="UniProtKB-KW"/>
</dbReference>
<dbReference type="GO" id="GO:0009073">
    <property type="term" value="P:aromatic amino acid family biosynthetic process"/>
    <property type="evidence" value="ECO:0007669"/>
    <property type="project" value="UniProtKB-KW"/>
</dbReference>
<dbReference type="GO" id="GO:0009423">
    <property type="term" value="P:chorismate biosynthetic process"/>
    <property type="evidence" value="ECO:0007669"/>
    <property type="project" value="UniProtKB-UniRule"/>
</dbReference>
<dbReference type="CDD" id="cd07304">
    <property type="entry name" value="Chorismate_synthase"/>
    <property type="match status" value="1"/>
</dbReference>
<dbReference type="FunFam" id="3.60.150.10:FF:000001">
    <property type="entry name" value="Chorismate synthase"/>
    <property type="match status" value="1"/>
</dbReference>
<dbReference type="Gene3D" id="3.60.150.10">
    <property type="entry name" value="Chorismate synthase AroC"/>
    <property type="match status" value="1"/>
</dbReference>
<dbReference type="HAMAP" id="MF_00300">
    <property type="entry name" value="Chorismate_synth"/>
    <property type="match status" value="1"/>
</dbReference>
<dbReference type="InterPro" id="IPR000453">
    <property type="entry name" value="Chorismate_synth"/>
</dbReference>
<dbReference type="InterPro" id="IPR035904">
    <property type="entry name" value="Chorismate_synth_AroC_sf"/>
</dbReference>
<dbReference type="InterPro" id="IPR020541">
    <property type="entry name" value="Chorismate_synthase_CS"/>
</dbReference>
<dbReference type="NCBIfam" id="TIGR00033">
    <property type="entry name" value="aroC"/>
    <property type="match status" value="1"/>
</dbReference>
<dbReference type="NCBIfam" id="NF003793">
    <property type="entry name" value="PRK05382.1"/>
    <property type="match status" value="1"/>
</dbReference>
<dbReference type="PANTHER" id="PTHR21085">
    <property type="entry name" value="CHORISMATE SYNTHASE"/>
    <property type="match status" value="1"/>
</dbReference>
<dbReference type="PANTHER" id="PTHR21085:SF0">
    <property type="entry name" value="CHORISMATE SYNTHASE"/>
    <property type="match status" value="1"/>
</dbReference>
<dbReference type="Pfam" id="PF01264">
    <property type="entry name" value="Chorismate_synt"/>
    <property type="match status" value="1"/>
</dbReference>
<dbReference type="PIRSF" id="PIRSF001456">
    <property type="entry name" value="Chorismate_synth"/>
    <property type="match status" value="1"/>
</dbReference>
<dbReference type="SUPFAM" id="SSF103263">
    <property type="entry name" value="Chorismate synthase, AroC"/>
    <property type="match status" value="1"/>
</dbReference>
<dbReference type="PROSITE" id="PS00787">
    <property type="entry name" value="CHORISMATE_SYNTHASE_1"/>
    <property type="match status" value="1"/>
</dbReference>
<dbReference type="PROSITE" id="PS00788">
    <property type="entry name" value="CHORISMATE_SYNTHASE_2"/>
    <property type="match status" value="1"/>
</dbReference>
<dbReference type="PROSITE" id="PS00789">
    <property type="entry name" value="CHORISMATE_SYNTHASE_3"/>
    <property type="match status" value="1"/>
</dbReference>
<keyword id="KW-0028">Amino-acid biosynthesis</keyword>
<keyword id="KW-0057">Aromatic amino acid biosynthesis</keyword>
<keyword id="KW-0274">FAD</keyword>
<keyword id="KW-0285">Flavoprotein</keyword>
<keyword id="KW-0288">FMN</keyword>
<keyword id="KW-0456">Lyase</keyword>
<keyword id="KW-0521">NADP</keyword>
<keyword id="KW-1185">Reference proteome</keyword>
<protein>
    <recommendedName>
        <fullName evidence="1">Chorismate synthase</fullName>
        <shortName evidence="1">CS</shortName>
        <ecNumber evidence="1">4.2.3.5</ecNumber>
    </recommendedName>
    <alternativeName>
        <fullName evidence="1">5-enolpyruvylshikimate-3-phosphate phospholyase</fullName>
    </alternativeName>
</protein>
<evidence type="ECO:0000255" key="1">
    <source>
        <dbReference type="HAMAP-Rule" id="MF_00300"/>
    </source>
</evidence>
<reference key="1">
    <citation type="journal article" date="2004" name="Proc. Natl. Acad. Sci. U.S.A.">
        <title>Genomic plasticity of the causative agent of melioidosis, Burkholderia pseudomallei.</title>
        <authorList>
            <person name="Holden M.T.G."/>
            <person name="Titball R.W."/>
            <person name="Peacock S.J."/>
            <person name="Cerdeno-Tarraga A.-M."/>
            <person name="Atkins T."/>
            <person name="Crossman L.C."/>
            <person name="Pitt T."/>
            <person name="Churcher C."/>
            <person name="Mungall K.L."/>
            <person name="Bentley S.D."/>
            <person name="Sebaihia M."/>
            <person name="Thomson N.R."/>
            <person name="Bason N."/>
            <person name="Beacham I.R."/>
            <person name="Brooks K."/>
            <person name="Brown K.A."/>
            <person name="Brown N.F."/>
            <person name="Challis G.L."/>
            <person name="Cherevach I."/>
            <person name="Chillingworth T."/>
            <person name="Cronin A."/>
            <person name="Crossett B."/>
            <person name="Davis P."/>
            <person name="DeShazer D."/>
            <person name="Feltwell T."/>
            <person name="Fraser A."/>
            <person name="Hance Z."/>
            <person name="Hauser H."/>
            <person name="Holroyd S."/>
            <person name="Jagels K."/>
            <person name="Keith K.E."/>
            <person name="Maddison M."/>
            <person name="Moule S."/>
            <person name="Price C."/>
            <person name="Quail M.A."/>
            <person name="Rabbinowitsch E."/>
            <person name="Rutherford K."/>
            <person name="Sanders M."/>
            <person name="Simmonds M."/>
            <person name="Songsivilai S."/>
            <person name="Stevens K."/>
            <person name="Tumapa S."/>
            <person name="Vesaratchavest M."/>
            <person name="Whitehead S."/>
            <person name="Yeats C."/>
            <person name="Barrell B.G."/>
            <person name="Oyston P.C.F."/>
            <person name="Parkhill J."/>
        </authorList>
    </citation>
    <scope>NUCLEOTIDE SEQUENCE [LARGE SCALE GENOMIC DNA]</scope>
    <source>
        <strain>K96243</strain>
    </source>
</reference>
<feature type="chain" id="PRO_0000140567" description="Chorismate synthase">
    <location>
        <begin position="1"/>
        <end position="369"/>
    </location>
</feature>
<feature type="binding site" evidence="1">
    <location>
        <position position="48"/>
    </location>
    <ligand>
        <name>NADP(+)</name>
        <dbReference type="ChEBI" id="CHEBI:58349"/>
    </ligand>
</feature>
<feature type="binding site" evidence="1">
    <location>
        <position position="54"/>
    </location>
    <ligand>
        <name>NADP(+)</name>
        <dbReference type="ChEBI" id="CHEBI:58349"/>
    </ligand>
</feature>
<feature type="binding site" evidence="1">
    <location>
        <begin position="125"/>
        <end position="127"/>
    </location>
    <ligand>
        <name>FMN</name>
        <dbReference type="ChEBI" id="CHEBI:58210"/>
    </ligand>
</feature>
<feature type="binding site" evidence="1">
    <location>
        <begin position="238"/>
        <end position="239"/>
    </location>
    <ligand>
        <name>FMN</name>
        <dbReference type="ChEBI" id="CHEBI:58210"/>
    </ligand>
</feature>
<feature type="binding site" evidence="1">
    <location>
        <position position="278"/>
    </location>
    <ligand>
        <name>FMN</name>
        <dbReference type="ChEBI" id="CHEBI:58210"/>
    </ligand>
</feature>
<feature type="binding site" evidence="1">
    <location>
        <begin position="293"/>
        <end position="297"/>
    </location>
    <ligand>
        <name>FMN</name>
        <dbReference type="ChEBI" id="CHEBI:58210"/>
    </ligand>
</feature>
<feature type="binding site" evidence="1">
    <location>
        <position position="319"/>
    </location>
    <ligand>
        <name>FMN</name>
        <dbReference type="ChEBI" id="CHEBI:58210"/>
    </ligand>
</feature>
<sequence>MSGNTLGTLFTVTTFGESHGPAIGCVIDGCPPGMALTEADVQLELDRRKPGTSRHVTQRQEPDQVEILSGVFEGVTTGAPIALLIRNTDQRSKDYGNIAETFRPGHADYTYWQKYGVRDYRGGGRSSARLTAPVVGAGAIAKKWLRERFGVEVRGYMSALGEIEIPFVDWSHVRENPFFAPNADIVPQLEGYMDALRKDGDSIGARIDVVASGVPVGWGEPLFDRLDADIAHAMMGINAVKGVEIGAGFASVAQRGSVHGDELTPDGFVGNHAGGVLGGISTGQDITVSIAIKPTSSIRTPRRSITRAGEPAVVETFGRHDPCVGIRATPIAESMLALVLIDHALRHRAQCGDVSSATPRIAARAPDAQ</sequence>
<organism>
    <name type="scientific">Burkholderia pseudomallei (strain K96243)</name>
    <dbReference type="NCBI Taxonomy" id="272560"/>
    <lineage>
        <taxon>Bacteria</taxon>
        <taxon>Pseudomonadati</taxon>
        <taxon>Pseudomonadota</taxon>
        <taxon>Betaproteobacteria</taxon>
        <taxon>Burkholderiales</taxon>
        <taxon>Burkholderiaceae</taxon>
        <taxon>Burkholderia</taxon>
        <taxon>pseudomallei group</taxon>
    </lineage>
</organism>